<reference key="1">
    <citation type="journal article" date="1999" name="Nature">
        <title>Sequence and analysis of chromosome 2 of the plant Arabidopsis thaliana.</title>
        <authorList>
            <person name="Lin X."/>
            <person name="Kaul S."/>
            <person name="Rounsley S.D."/>
            <person name="Shea T.P."/>
            <person name="Benito M.-I."/>
            <person name="Town C.D."/>
            <person name="Fujii C.Y."/>
            <person name="Mason T.M."/>
            <person name="Bowman C.L."/>
            <person name="Barnstead M.E."/>
            <person name="Feldblyum T.V."/>
            <person name="Buell C.R."/>
            <person name="Ketchum K.A."/>
            <person name="Lee J.J."/>
            <person name="Ronning C.M."/>
            <person name="Koo H.L."/>
            <person name="Moffat K.S."/>
            <person name="Cronin L.A."/>
            <person name="Shen M."/>
            <person name="Pai G."/>
            <person name="Van Aken S."/>
            <person name="Umayam L."/>
            <person name="Tallon L.J."/>
            <person name="Gill J.E."/>
            <person name="Adams M.D."/>
            <person name="Carrera A.J."/>
            <person name="Creasy T.H."/>
            <person name="Goodman H.M."/>
            <person name="Somerville C.R."/>
            <person name="Copenhaver G.P."/>
            <person name="Preuss D."/>
            <person name="Nierman W.C."/>
            <person name="White O."/>
            <person name="Eisen J.A."/>
            <person name="Salzberg S.L."/>
            <person name="Fraser C.M."/>
            <person name="Venter J.C."/>
        </authorList>
    </citation>
    <scope>NUCLEOTIDE SEQUENCE [LARGE SCALE GENOMIC DNA]</scope>
    <source>
        <strain>cv. Columbia</strain>
    </source>
</reference>
<reference key="2">
    <citation type="journal article" date="2017" name="Plant J.">
        <title>Araport11: a complete reannotation of the Arabidopsis thaliana reference genome.</title>
        <authorList>
            <person name="Cheng C.Y."/>
            <person name="Krishnakumar V."/>
            <person name="Chan A.P."/>
            <person name="Thibaud-Nissen F."/>
            <person name="Schobel S."/>
            <person name="Town C.D."/>
        </authorList>
    </citation>
    <scope>GENOME REANNOTATION</scope>
    <source>
        <strain>cv. Columbia</strain>
    </source>
</reference>
<reference key="3">
    <citation type="journal article" date="2000" name="Biochem. Biophys. Res. Commun.">
        <title>Animal and plant members of a gene family with similarity to alkaloid-synthesizing enzymes.</title>
        <authorList>
            <person name="Fabbri M."/>
            <person name="Delp G."/>
            <person name="Schmidt O."/>
            <person name="Theopold U."/>
        </authorList>
    </citation>
    <scope>GENE FAMILY</scope>
    <scope>NOMENCLATURE</scope>
</reference>
<reference key="4">
    <citation type="journal article" date="2009" name="Plant Biol.">
        <title>Phylogenetic and transcriptional analysis of a strictosidine synthase-like gene family in Arabidopsis thaliana reveals involvement in plant defence responses.</title>
        <authorList>
            <person name="Sohani M.M."/>
            <person name="Schenk P.M."/>
            <person name="Schultz C.J."/>
            <person name="Schmidt O."/>
        </authorList>
    </citation>
    <scope>GENE FAMILY</scope>
    <source>
        <strain>cv. Columbia</strain>
    </source>
</reference>
<accession>F4IJZ6</accession>
<accession>Q9ZVB7</accession>
<evidence type="ECO:0000250" key="1"/>
<evidence type="ECO:0000255" key="2"/>
<evidence type="ECO:0000255" key="3">
    <source>
        <dbReference type="PROSITE-ProRule" id="PRU00498"/>
    </source>
</evidence>
<evidence type="ECO:0000256" key="4">
    <source>
        <dbReference type="SAM" id="MobiDB-lite"/>
    </source>
</evidence>
<evidence type="ECO:0000303" key="5">
    <source>
    </source>
</evidence>
<evidence type="ECO:0000303" key="6">
    <source>
    </source>
</evidence>
<evidence type="ECO:0000305" key="7"/>
<evidence type="ECO:0000312" key="8">
    <source>
        <dbReference type="Araport" id="AT2G41300"/>
    </source>
</evidence>
<evidence type="ECO:0000312" key="9">
    <source>
        <dbReference type="EMBL" id="AAC78542.1"/>
    </source>
</evidence>
<evidence type="ECO:0000312" key="10">
    <source>
        <dbReference type="Proteomes" id="UP000006548"/>
    </source>
</evidence>
<sequence length="394" mass="44391">MESLLLIAYAFLYLFLLSHEAEYKINADQSENSNVGRFGGNYGRLGRLSGSIHHWTGEYRGLEKRPNHSEDNPPSRGWTGEPGLDPRGEGPYVGVTDGRILKWSGEDLGWIEFAYSSPHRKNCSSHKVEPACGRPLGLSFEKKSGDLYFCDGYLGVMKVGPKGGLAEKVVDEVEGQKVMFANQMDIDEEEDAIYFNDSSDTYHFGDVFYAFLCGEKTGRAIRYDKKTKEAKVIMDRLHFPNGLALSIDGSFVLSCEVPTQLVHRYWAKGPNAGTRDIFAKLPGYADNIRRTETGDFWVALHSKKTPFSRLSMIHPWVGKFFIKTLKMELLVFLFEGGKPHAVAVKLSGKTGEIMEILEDSEGKNMKFISEVQERDGRLWFGSVFLPSVWVLDRQ</sequence>
<dbReference type="EMBL" id="AC005662">
    <property type="protein sequence ID" value="AAC78542.1"/>
    <property type="molecule type" value="Genomic_DNA"/>
</dbReference>
<dbReference type="EMBL" id="CP002685">
    <property type="protein sequence ID" value="AEC09958.1"/>
    <property type="molecule type" value="Genomic_DNA"/>
</dbReference>
<dbReference type="PIR" id="B84840">
    <property type="entry name" value="B84840"/>
</dbReference>
<dbReference type="RefSeq" id="NP_181662.3">
    <property type="nucleotide sequence ID" value="NM_129694.5"/>
</dbReference>
<dbReference type="SMR" id="F4IJZ6"/>
<dbReference type="FunCoup" id="F4IJZ6">
    <property type="interactions" value="1444"/>
</dbReference>
<dbReference type="STRING" id="3702.F4IJZ6"/>
<dbReference type="GlyCosmos" id="F4IJZ6">
    <property type="glycosylation" value="3 sites, No reported glycans"/>
</dbReference>
<dbReference type="GlyGen" id="F4IJZ6">
    <property type="glycosylation" value="3 sites"/>
</dbReference>
<dbReference type="PaxDb" id="3702-AT2G41300.1"/>
<dbReference type="ProteomicsDB" id="228379"/>
<dbReference type="EnsemblPlants" id="AT2G41300.1">
    <property type="protein sequence ID" value="AT2G41300.1"/>
    <property type="gene ID" value="AT2G41300"/>
</dbReference>
<dbReference type="GeneID" id="818729"/>
<dbReference type="Gramene" id="AT2G41300.1">
    <property type="protein sequence ID" value="AT2G41300.1"/>
    <property type="gene ID" value="AT2G41300"/>
</dbReference>
<dbReference type="KEGG" id="ath:AT2G41300"/>
<dbReference type="Araport" id="AT2G41300"/>
<dbReference type="TAIR" id="AT2G41300">
    <property type="gene designation" value="SSL1"/>
</dbReference>
<dbReference type="eggNOG" id="KOG1520">
    <property type="taxonomic scope" value="Eukaryota"/>
</dbReference>
<dbReference type="HOGENOM" id="CLU_023267_2_0_1"/>
<dbReference type="InParanoid" id="F4IJZ6"/>
<dbReference type="OMA" id="FVGPYII"/>
<dbReference type="PRO" id="PR:F4IJZ6"/>
<dbReference type="Proteomes" id="UP000006548">
    <property type="component" value="Chromosome 2"/>
</dbReference>
<dbReference type="ExpressionAtlas" id="F4IJZ6">
    <property type="expression patterns" value="baseline and differential"/>
</dbReference>
<dbReference type="GO" id="GO:0005773">
    <property type="term" value="C:vacuole"/>
    <property type="evidence" value="ECO:0007669"/>
    <property type="project" value="UniProtKB-SubCell"/>
</dbReference>
<dbReference type="FunFam" id="2.120.10.30:FF:000032">
    <property type="entry name" value="Protein STRICTOSIDINE SYNTHASE-LIKE 13"/>
    <property type="match status" value="1"/>
</dbReference>
<dbReference type="Gene3D" id="2.120.10.30">
    <property type="entry name" value="TolB, C-terminal domain"/>
    <property type="match status" value="1"/>
</dbReference>
<dbReference type="InterPro" id="IPR011042">
    <property type="entry name" value="6-blade_b-propeller_TolB-like"/>
</dbReference>
<dbReference type="InterPro" id="IPR018119">
    <property type="entry name" value="Strictosidine_synth_cons-reg"/>
</dbReference>
<dbReference type="PANTHER" id="PTHR10426:SF111">
    <property type="entry name" value="PROTEIN STRICTOSIDINE SYNTHASE-LIKE 1"/>
    <property type="match status" value="1"/>
</dbReference>
<dbReference type="PANTHER" id="PTHR10426">
    <property type="entry name" value="STRICTOSIDINE SYNTHASE-RELATED"/>
    <property type="match status" value="1"/>
</dbReference>
<dbReference type="Pfam" id="PF03088">
    <property type="entry name" value="Str_synth"/>
    <property type="match status" value="1"/>
</dbReference>
<dbReference type="SUPFAM" id="SSF63829">
    <property type="entry name" value="Calcium-dependent phosphotriesterase"/>
    <property type="match status" value="1"/>
</dbReference>
<name>SSL1_ARATH</name>
<organism evidence="10">
    <name type="scientific">Arabidopsis thaliana</name>
    <name type="common">Mouse-ear cress</name>
    <dbReference type="NCBI Taxonomy" id="3702"/>
    <lineage>
        <taxon>Eukaryota</taxon>
        <taxon>Viridiplantae</taxon>
        <taxon>Streptophyta</taxon>
        <taxon>Embryophyta</taxon>
        <taxon>Tracheophyta</taxon>
        <taxon>Spermatophyta</taxon>
        <taxon>Magnoliopsida</taxon>
        <taxon>eudicotyledons</taxon>
        <taxon>Gunneridae</taxon>
        <taxon>Pentapetalae</taxon>
        <taxon>rosids</taxon>
        <taxon>malvids</taxon>
        <taxon>Brassicales</taxon>
        <taxon>Brassicaceae</taxon>
        <taxon>Camelineae</taxon>
        <taxon>Arabidopsis</taxon>
    </lineage>
</organism>
<protein>
    <recommendedName>
        <fullName evidence="5">Protein STRICTOSIDINE SYNTHASE-LIKE 1</fullName>
        <shortName evidence="5">AtSSL1</shortName>
    </recommendedName>
    <alternativeName>
        <fullName evidence="6">Strictosidine synthase 7</fullName>
        <shortName evidence="6">AtSS7</shortName>
    </alternativeName>
</protein>
<keyword id="KW-0325">Glycoprotein</keyword>
<keyword id="KW-1185">Reference proteome</keyword>
<keyword id="KW-0732">Signal</keyword>
<keyword id="KW-0926">Vacuole</keyword>
<feature type="signal peptide" evidence="2">
    <location>
        <begin position="1"/>
        <end position="21"/>
    </location>
</feature>
<feature type="chain" id="PRO_0000431589" description="Protein STRICTOSIDINE SYNTHASE-LIKE 1" evidence="2">
    <location>
        <begin position="22"/>
        <end position="394"/>
    </location>
</feature>
<feature type="region of interest" description="Disordered" evidence="4">
    <location>
        <begin position="61"/>
        <end position="92"/>
    </location>
</feature>
<feature type="compositionally biased region" description="Basic and acidic residues" evidence="4">
    <location>
        <begin position="61"/>
        <end position="73"/>
    </location>
</feature>
<feature type="glycosylation site" description="N-linked (GlcNAc...) asparagine" evidence="3">
    <location>
        <position position="67"/>
    </location>
</feature>
<feature type="glycosylation site" description="N-linked (GlcNAc...) asparagine" evidence="3">
    <location>
        <position position="122"/>
    </location>
</feature>
<feature type="glycosylation site" description="N-linked (GlcNAc...) asparagine" evidence="3">
    <location>
        <position position="196"/>
    </location>
</feature>
<feature type="sequence conflict" description="In Ref. 1; AAC78542." evidence="7" ref="1">
    <original>G</original>
    <variation>GR</variation>
    <location>
        <position position="205"/>
    </location>
</feature>
<comment type="subcellular location">
    <subcellularLocation>
        <location evidence="1">Vacuole</location>
    </subcellularLocation>
</comment>
<comment type="similarity">
    <text evidence="7">Belongs to the strictosidine synthase family.</text>
</comment>
<gene>
    <name evidence="5" type="primary">SSL1</name>
    <name evidence="6" type="synonym">SS7</name>
    <name evidence="8" type="ordered locus">At2g41300</name>
    <name evidence="9" type="ORF">F13H10.15</name>
</gene>
<proteinExistence type="inferred from homology"/>